<proteinExistence type="evidence at protein level"/>
<keyword id="KW-0150">Chloroplast</keyword>
<keyword id="KW-0413">Isomerase</keyword>
<keyword id="KW-0456">Lyase</keyword>
<keyword id="KW-0460">Magnesium</keyword>
<keyword id="KW-0479">Metal-binding</keyword>
<keyword id="KW-0511">Multifunctional enzyme</keyword>
<keyword id="KW-0934">Plastid</keyword>
<keyword id="KW-0809">Transit peptide</keyword>
<organism>
    <name type="scientific">Ginkgo biloba</name>
    <name type="common">Ginkgo</name>
    <name type="synonym">Maidenhair tree</name>
    <dbReference type="NCBI Taxonomy" id="3311"/>
    <lineage>
        <taxon>Eukaryota</taxon>
        <taxon>Viridiplantae</taxon>
        <taxon>Streptophyta</taxon>
        <taxon>Embryophyta</taxon>
        <taxon>Tracheophyta</taxon>
        <taxon>Spermatophyta</taxon>
        <taxon>Ginkgoidae</taxon>
        <taxon>Ginkgoales</taxon>
        <taxon>Ginkgoaceae</taxon>
        <taxon>Ginkgo</taxon>
    </lineage>
</organism>
<dbReference type="EC" id="4.2.3.32"/>
<dbReference type="EC" id="5.5.1.12"/>
<dbReference type="EMBL" id="AF331704">
    <property type="protein sequence ID" value="AAL09965.1"/>
    <property type="molecule type" value="mRNA"/>
</dbReference>
<dbReference type="EMBL" id="AY574248">
    <property type="protein sequence ID" value="AAS89668.1"/>
    <property type="molecule type" value="Genomic_DNA"/>
</dbReference>
<dbReference type="SMR" id="Q947C4"/>
<dbReference type="KEGG" id="ag:AAL09965"/>
<dbReference type="BRENDA" id="4.2.3.32">
    <property type="organism ID" value="2435"/>
</dbReference>
<dbReference type="UniPathway" id="UPA00961"/>
<dbReference type="GO" id="GO:0009507">
    <property type="term" value="C:chloroplast"/>
    <property type="evidence" value="ECO:0007669"/>
    <property type="project" value="UniProtKB-SubCell"/>
</dbReference>
<dbReference type="GO" id="GO:0050559">
    <property type="term" value="F:copalyl diphosphate synthase activity"/>
    <property type="evidence" value="ECO:0007669"/>
    <property type="project" value="UniProtKB-EC"/>
</dbReference>
<dbReference type="GO" id="GO:0052678">
    <property type="term" value="F:levopimaradiene synthase activity"/>
    <property type="evidence" value="ECO:0007669"/>
    <property type="project" value="UniProtKB-EC"/>
</dbReference>
<dbReference type="GO" id="GO:0000287">
    <property type="term" value="F:magnesium ion binding"/>
    <property type="evidence" value="ECO:0007669"/>
    <property type="project" value="InterPro"/>
</dbReference>
<dbReference type="GO" id="GO:0010333">
    <property type="term" value="F:terpene synthase activity"/>
    <property type="evidence" value="ECO:0007669"/>
    <property type="project" value="InterPro"/>
</dbReference>
<dbReference type="GO" id="GO:0016102">
    <property type="term" value="P:diterpenoid biosynthetic process"/>
    <property type="evidence" value="ECO:0007669"/>
    <property type="project" value="InterPro"/>
</dbReference>
<dbReference type="CDD" id="cd00684">
    <property type="entry name" value="Terpene_cyclase_plant_C1"/>
    <property type="match status" value="1"/>
</dbReference>
<dbReference type="FunFam" id="1.50.10.130:FF:000002">
    <property type="entry name" value="Ent-copalyl diphosphate synthase, chloroplastic"/>
    <property type="match status" value="1"/>
</dbReference>
<dbReference type="FunFam" id="1.10.600.10:FF:000005">
    <property type="entry name" value="Ent-kaur-16-ene synthase, chloroplastic"/>
    <property type="match status" value="1"/>
</dbReference>
<dbReference type="Gene3D" id="1.50.10.160">
    <property type="match status" value="1"/>
</dbReference>
<dbReference type="Gene3D" id="1.10.600.10">
    <property type="entry name" value="Farnesyl Diphosphate Synthase"/>
    <property type="match status" value="1"/>
</dbReference>
<dbReference type="Gene3D" id="1.50.10.130">
    <property type="entry name" value="Terpene synthase, N-terminal domain"/>
    <property type="match status" value="1"/>
</dbReference>
<dbReference type="InterPro" id="IPR008949">
    <property type="entry name" value="Isoprenoid_synthase_dom_sf"/>
</dbReference>
<dbReference type="InterPro" id="IPR034741">
    <property type="entry name" value="Terpene_cyclase-like_1_C"/>
</dbReference>
<dbReference type="InterPro" id="IPR044814">
    <property type="entry name" value="Terpene_cyclase_plant_C1"/>
</dbReference>
<dbReference type="InterPro" id="IPR001906">
    <property type="entry name" value="Terpene_synth_N"/>
</dbReference>
<dbReference type="InterPro" id="IPR036965">
    <property type="entry name" value="Terpene_synth_N_sf"/>
</dbReference>
<dbReference type="InterPro" id="IPR050148">
    <property type="entry name" value="Terpene_synthase-like"/>
</dbReference>
<dbReference type="InterPro" id="IPR005630">
    <property type="entry name" value="Terpene_synthase_metal-bd"/>
</dbReference>
<dbReference type="InterPro" id="IPR008930">
    <property type="entry name" value="Terpenoid_cyclase/PrenylTrfase"/>
</dbReference>
<dbReference type="PANTHER" id="PTHR31739">
    <property type="entry name" value="ENT-COPALYL DIPHOSPHATE SYNTHASE, CHLOROPLASTIC"/>
    <property type="match status" value="1"/>
</dbReference>
<dbReference type="PANTHER" id="PTHR31739:SF4">
    <property type="entry name" value="ENT-COPALYL DIPHOSPHATE SYNTHASE, CHLOROPLASTIC"/>
    <property type="match status" value="1"/>
</dbReference>
<dbReference type="Pfam" id="PF01397">
    <property type="entry name" value="Terpene_synth"/>
    <property type="match status" value="1"/>
</dbReference>
<dbReference type="Pfam" id="PF03936">
    <property type="entry name" value="Terpene_synth_C"/>
    <property type="match status" value="1"/>
</dbReference>
<dbReference type="SFLD" id="SFLDS00005">
    <property type="entry name" value="Isoprenoid_Synthase_Type_I"/>
    <property type="match status" value="1"/>
</dbReference>
<dbReference type="SFLD" id="SFLDG01019">
    <property type="entry name" value="Terpene_Cyclase_Like_1_C_Termi"/>
    <property type="match status" value="1"/>
</dbReference>
<dbReference type="SFLD" id="SFLDG01014">
    <property type="entry name" value="Terpene_Cyclase_Like_1_N-term"/>
    <property type="match status" value="1"/>
</dbReference>
<dbReference type="SFLD" id="SFLDG01605">
    <property type="entry name" value="Terpene_Cyclase_Like_1_N-term"/>
    <property type="match status" value="1"/>
</dbReference>
<dbReference type="SUPFAM" id="SSF48239">
    <property type="entry name" value="Terpenoid cyclases/Protein prenyltransferases"/>
    <property type="match status" value="2"/>
</dbReference>
<dbReference type="SUPFAM" id="SSF48576">
    <property type="entry name" value="Terpenoid synthases"/>
    <property type="match status" value="1"/>
</dbReference>
<gene>
    <name type="primary">LPS</name>
</gene>
<sequence length="873" mass="100290">MAGVLFANLPCSLQLSPKVPFRQSTNILIPFHKRSSFGFNAQHCVRSHLRLRWNCVGIHASAAETRPDQLPQEERFVSRLNADYHPAVWKDDFIDSLTSPNSHATSKSSVDETINKRIQTLVKEIQCMFQSMGDGETNPSAYDTAWVARIPSIDGSGAPQFPQTLQWILNNQLPDGSWGEECIFLAYDRVLNTLACLLTLKIWNKGDIQVQKGVEFVRKHMEEMKDEADNHRPSGFEVVFPAMLDEAKSLGLDLPYHLPFISQIHQKRQKKLQKIPLNVLHNHQTALLYSLEGLQDVVDWQEITNLQSRDGSFLSSPASTACVFMHTQNKRCLHFLNFVLSKFGDYVPCHYPLDLFERLWAVDTVERLGIDRYFKKEIKESLDYVYRYWDAERGVGWARCNPIPDVDDTAMGLRILRLHGYNVSSDVLENFRDEKGDFFCFAGQTQIGVTDNLNLYRCSQVCFPGEKIMEEAKTFTTNHLQNALAKNNAFDKWAVKKDLPGEVEYAIKYPWHRSMPRLEARSYIEQFGSNDVWLGKTVYKMLYVSNEKYLELAKLDFNMVQALHQKETQHIVSWWRESGFNDLTFTRQRPVEMYFSVAVSMFEPEFAACRIAYAKTSCLAVILDDLYDTHGSLDDLKLFSEAVRRWDISVLDSVRDNQLKVCFLGLYNTVNGFGKDGLKEQGRDVLGYLRKVWEGLLASYTKEAEWSAAKYVPTFNEYVENAKVSIALATVVLNSIFFTGELLPDYILQQVDLRSKFLHLVSLTGRLINDTKTYQAERNRGELVSSVQCYMRENPECTEEEALSHVYGIIDNALKELNWELANPASNAPLCVRRLLFNTARVMQLFYMYRDGFGISDKEMKDHVSRTLFDPVA</sequence>
<name>TPSD1_GINBI</name>
<comment type="function">
    <text evidence="5">Catalyzes the initial cyclization step in the biosynthesis of ginkgolides, a structurally unique family of diterpenoids that are highly specific platelet-activating-factor receptor antagonists. Bifunctional enzyme that catalyzes two sequential cyclizations of geranylgeranyl diphosphate (GGPP) to levopimaradiene.</text>
</comment>
<comment type="catalytic activity">
    <reaction>
        <text>(2E,6E,10E)-geranylgeranyl diphosphate = (+)-copalyl diphosphate</text>
        <dbReference type="Rhea" id="RHEA:24316"/>
        <dbReference type="ChEBI" id="CHEBI:58635"/>
        <dbReference type="ChEBI" id="CHEBI:58756"/>
        <dbReference type="EC" id="5.5.1.12"/>
    </reaction>
</comment>
<comment type="catalytic activity">
    <reaction>
        <text>(+)-copalyl diphosphate = abieta-8(14),12-diene + diphosphate</text>
        <dbReference type="Rhea" id="RHEA:25548"/>
        <dbReference type="ChEBI" id="CHEBI:29616"/>
        <dbReference type="ChEBI" id="CHEBI:33019"/>
        <dbReference type="ChEBI" id="CHEBI:58635"/>
        <dbReference type="EC" id="4.2.3.32"/>
    </reaction>
</comment>
<comment type="cofactor">
    <cofactor evidence="3">
        <name>Mg(2+)</name>
        <dbReference type="ChEBI" id="CHEBI:18420"/>
    </cofactor>
    <text evidence="3">Binds 3 Mg(2+) ions per subunit.</text>
</comment>
<comment type="biophysicochemical properties">
    <phDependence>
        <text>Optimum pH is 7.2.</text>
    </phDependence>
</comment>
<comment type="pathway">
    <text>Terpene metabolism; ginkgolide biosynthesis.</text>
</comment>
<comment type="subcellular location">
    <subcellularLocation>
        <location>Plastid</location>
        <location>Chloroplast</location>
    </subcellularLocation>
</comment>
<comment type="tissue specificity">
    <text evidence="6">Expressed in roots.</text>
</comment>
<comment type="domain">
    <text evidence="7">The Asp-Xaa-Asp-Asp (DXDD) motif is important for the catalytic activity in the class II active site relevant for the cyclization of GGPP. The Asp-Asp-Xaa-Xaa-Asp/Glu (DDXXD/E) motif is important for the catalytic activity in the class I active site, presumably through binding to Mg(2+).</text>
</comment>
<comment type="similarity">
    <text evidence="7">Belongs to the terpene synthase family. Tpsd subfamily.</text>
</comment>
<feature type="transit peptide" description="Chloroplast" evidence="4">
    <location>
        <begin position="1"/>
        <end position="59"/>
    </location>
</feature>
<feature type="chain" id="PRO_0000348950" description="Bifunctional levopimaradiene synthase, chloroplastic">
    <location>
        <begin position="60"/>
        <end position="873"/>
    </location>
</feature>
<feature type="short sequence motif" description="DXDD motif" evidence="7">
    <location>
        <begin position="405"/>
        <end position="408"/>
    </location>
</feature>
<feature type="short sequence motif" description="DDXXD motif" evidence="7">
    <location>
        <begin position="624"/>
        <end position="628"/>
    </location>
</feature>
<feature type="binding site" evidence="2">
    <location>
        <position position="271"/>
    </location>
    <ligand>
        <name>substrate</name>
    </ligand>
</feature>
<feature type="binding site" evidence="1">
    <location>
        <position position="405"/>
    </location>
    <ligand>
        <name>Mg(2+)</name>
        <dbReference type="ChEBI" id="CHEBI:18420"/>
        <label>4</label>
    </ligand>
</feature>
<feature type="binding site" evidence="1">
    <location>
        <position position="407"/>
    </location>
    <ligand>
        <name>Mg(2+)</name>
        <dbReference type="ChEBI" id="CHEBI:18420"/>
        <label>4</label>
    </ligand>
</feature>
<feature type="binding site" evidence="2">
    <location>
        <position position="492"/>
    </location>
    <ligand>
        <name>substrate</name>
    </ligand>
</feature>
<feature type="binding site" evidence="3">
    <location>
        <position position="624"/>
    </location>
    <ligand>
        <name>Mg(2+)</name>
        <dbReference type="ChEBI" id="CHEBI:18420"/>
        <label>1</label>
    </ligand>
</feature>
<feature type="binding site" evidence="3">
    <location>
        <position position="624"/>
    </location>
    <ligand>
        <name>Mg(2+)</name>
        <dbReference type="ChEBI" id="CHEBI:18420"/>
        <label>2</label>
    </ligand>
</feature>
<feature type="binding site" evidence="3">
    <location>
        <position position="628"/>
    </location>
    <ligand>
        <name>Mg(2+)</name>
        <dbReference type="ChEBI" id="CHEBI:18420"/>
        <label>1</label>
    </ligand>
</feature>
<feature type="binding site" evidence="3">
    <location>
        <position position="628"/>
    </location>
    <ligand>
        <name>Mg(2+)</name>
        <dbReference type="ChEBI" id="CHEBI:18420"/>
        <label>2</label>
    </ligand>
</feature>
<feature type="binding site" evidence="3">
    <location>
        <position position="769"/>
    </location>
    <ligand>
        <name>Mg(2+)</name>
        <dbReference type="ChEBI" id="CHEBI:18420"/>
        <label>3</label>
    </ligand>
</feature>
<feature type="binding site" evidence="3">
    <location>
        <position position="773"/>
    </location>
    <ligand>
        <name>Mg(2+)</name>
        <dbReference type="ChEBI" id="CHEBI:18420"/>
        <label>3</label>
    </ligand>
</feature>
<feature type="binding site" evidence="3">
    <location>
        <position position="777"/>
    </location>
    <ligand>
        <name>Mg(2+)</name>
        <dbReference type="ChEBI" id="CHEBI:18420"/>
        <label>3</label>
    </ligand>
</feature>
<reference key="1">
    <citation type="journal article" date="2001" name="Arch. Biochem. Biophys.">
        <title>Cloning and characterization of Ginkgo biloba levopimaradiene synthase which catalyzes the first committed step in ginkgolide biosynthesis.</title>
        <authorList>
            <person name="Schepmann H.G."/>
            <person name="Pang J."/>
            <person name="Matsuda S.P."/>
        </authorList>
    </citation>
    <scope>NUCLEOTIDE SEQUENCE [MRNA]</scope>
    <scope>CHARACTERIZATION</scope>
</reference>
<reference key="2">
    <citation type="submission" date="2005-03" db="EMBL/GenBank/DDBJ databases">
        <title>Genomic structure of levopimaradiene synthase from Ginkgo biloba.</title>
        <authorList>
            <person name="Lee K.I."/>
            <person name="Chang Y.J."/>
            <person name="Kim S.U."/>
        </authorList>
    </citation>
    <scope>NUCLEOTIDE SEQUENCE [GENOMIC DNA]</scope>
</reference>
<reference key="3">
    <citation type="journal article" date="2004" name="Plant Physiol.">
        <title>Functional characterization of nine Norway Spruce TPS genes and evolution of gymnosperm terpene synthases of the TPS-d subfamily.</title>
        <authorList>
            <person name="Martin D.M."/>
            <person name="Faeldt J."/>
            <person name="Bohlmann J."/>
        </authorList>
    </citation>
    <scope>GENE FAMILY</scope>
    <scope>NOMENCLATURE</scope>
</reference>
<reference key="4">
    <citation type="journal article" date="2006" name="Phytochemistry">
        <title>Diterpene resin acid biosynthesis in loblolly pine (Pinus taeda): functional characterization of abietadiene/levopimaradiene synthase (PtTPS-LAS) cDNA and subcellular targeting of PtTPS-LAS and abietadienol/abietadienal oxidase (PtAO, CYP720B1).</title>
        <authorList>
            <person name="Ro D.-K."/>
            <person name="Bohlmann J."/>
        </authorList>
    </citation>
    <scope>FUNCTION</scope>
</reference>
<reference key="5">
    <citation type="journal article" date="2006" name="Planta Med.">
        <title>Identification of class 2 1-deoxy-D-xylulose 5-phosphate synthase and 1-deoxy-D-xylulose 5-phosphate reductoisomerase genes from Ginkgo biloba and their transcription in embryo culture with respect to ginkgolide biosynthesis.</title>
        <authorList>
            <person name="Kim S.M."/>
            <person name="Kuzuyama T."/>
            <person name="Chang Y.J."/>
            <person name="Song K.S."/>
            <person name="Kim S.U."/>
        </authorList>
    </citation>
    <scope>TISSUE SPECIFICITY</scope>
</reference>
<protein>
    <recommendedName>
        <fullName>Bifunctional levopimaradiene synthase, chloroplastic</fullName>
    </recommendedName>
    <alternativeName>
        <fullName>Diterpene synthase</fullName>
    </alternativeName>
    <alternativeName>
        <fullName>GbTPS-Lev</fullName>
    </alternativeName>
    <domain>
        <recommendedName>
            <fullName>Levopimaradiene synthase</fullName>
            <ecNumber>4.2.3.32</ecNumber>
        </recommendedName>
    </domain>
    <domain>
        <recommendedName>
            <fullName>Copalyl diphosphate synthase</fullName>
            <ecNumber>5.5.1.12</ecNumber>
        </recommendedName>
    </domain>
</protein>
<accession>Q947C4</accession>
<evidence type="ECO:0000250" key="1">
    <source>
        <dbReference type="UniProtKB" id="C7BKP9"/>
    </source>
</evidence>
<evidence type="ECO:0000250" key="2">
    <source>
        <dbReference type="UniProtKB" id="Q38802"/>
    </source>
</evidence>
<evidence type="ECO:0000250" key="3">
    <source>
        <dbReference type="UniProtKB" id="Q40577"/>
    </source>
</evidence>
<evidence type="ECO:0000255" key="4"/>
<evidence type="ECO:0000269" key="5">
    <source>
    </source>
</evidence>
<evidence type="ECO:0000269" key="6">
    <source>
    </source>
</evidence>
<evidence type="ECO:0000305" key="7"/>